<comment type="function">
    <text evidence="1">Catalyzes the reversible conversion of 2-phosphoglycerate (2-PG) into phosphoenolpyruvate (PEP). It is essential for the degradation of carbohydrates via glycolysis.</text>
</comment>
<comment type="catalytic activity">
    <reaction evidence="1">
        <text>(2R)-2-phosphoglycerate = phosphoenolpyruvate + H2O</text>
        <dbReference type="Rhea" id="RHEA:10164"/>
        <dbReference type="ChEBI" id="CHEBI:15377"/>
        <dbReference type="ChEBI" id="CHEBI:58289"/>
        <dbReference type="ChEBI" id="CHEBI:58702"/>
        <dbReference type="EC" id="4.2.1.11"/>
    </reaction>
</comment>
<comment type="cofactor">
    <cofactor evidence="1">
        <name>Mg(2+)</name>
        <dbReference type="ChEBI" id="CHEBI:18420"/>
    </cofactor>
    <text evidence="1">Binds a second Mg(2+) ion via substrate during catalysis.</text>
</comment>
<comment type="pathway">
    <text evidence="1">Carbohydrate degradation; glycolysis; pyruvate from D-glyceraldehyde 3-phosphate: step 4/5.</text>
</comment>
<comment type="subcellular location">
    <subcellularLocation>
        <location evidence="1">Cytoplasm</location>
    </subcellularLocation>
    <subcellularLocation>
        <location evidence="1">Secreted</location>
    </subcellularLocation>
    <subcellularLocation>
        <location evidence="1">Cell surface</location>
    </subcellularLocation>
    <text evidence="1">Fractions of enolase are present in both the cytoplasm and on the cell surface.</text>
</comment>
<comment type="similarity">
    <text evidence="1">Belongs to the enolase family.</text>
</comment>
<gene>
    <name evidence="1" type="primary">eno</name>
    <name type="ordered locus">ERGA_CDS_04960</name>
</gene>
<protein>
    <recommendedName>
        <fullName evidence="1">Enolase</fullName>
        <ecNumber evidence="1">4.2.1.11</ecNumber>
    </recommendedName>
    <alternativeName>
        <fullName evidence="1">2-phospho-D-glycerate hydro-lyase</fullName>
    </alternativeName>
    <alternativeName>
        <fullName evidence="1">2-phosphoglycerate dehydratase</fullName>
    </alternativeName>
</protein>
<proteinExistence type="inferred from homology"/>
<keyword id="KW-0963">Cytoplasm</keyword>
<keyword id="KW-0324">Glycolysis</keyword>
<keyword id="KW-0456">Lyase</keyword>
<keyword id="KW-0460">Magnesium</keyword>
<keyword id="KW-0479">Metal-binding</keyword>
<keyword id="KW-0964">Secreted</keyword>
<sequence>MANVKINNISARQILDSRGYPTIEVQITLSNNVFAKASIPSGASVGKFEAVELRDHDTNYYHGYGVTKAVNLINSEIGQKIIKLETLDQEKIDNALIEIDGTNNKSRVGANSILAISLAVAKAAASTLNIPLYQYLGGITAKILPTPLINIINGGMHADNNLDFHEFMIIPHGANSFEDAIRMSSEVFHTLKKILKQKQYNTNVGDEGGFAPNIKDNTEVFDIIIDAIEKSGYKVYKDFSLGLDVAASTFYKNEKYKFSDYQFSTHELVEYYKNIVTQYPIISLEDPIAEEDTLGWKMITKELGDKIQIVGDDLFVTNCKLIKNGIDNNMANAVLIKPNQIGTLTETLNAIRLAQKNNYKVILSHRSGETNDTTISHIAVAVNCGQIKTGSLSRSERLAKYNELLYIEKLLNTSAIYQGML</sequence>
<name>ENO_EHRRG</name>
<evidence type="ECO:0000255" key="1">
    <source>
        <dbReference type="HAMAP-Rule" id="MF_00318"/>
    </source>
</evidence>
<organism>
    <name type="scientific">Ehrlichia ruminantium (strain Gardel)</name>
    <dbReference type="NCBI Taxonomy" id="302409"/>
    <lineage>
        <taxon>Bacteria</taxon>
        <taxon>Pseudomonadati</taxon>
        <taxon>Pseudomonadota</taxon>
        <taxon>Alphaproteobacteria</taxon>
        <taxon>Rickettsiales</taxon>
        <taxon>Anaplasmataceae</taxon>
        <taxon>Ehrlichia</taxon>
    </lineage>
</organism>
<reference key="1">
    <citation type="journal article" date="2006" name="J. Bacteriol.">
        <title>Comparative genomic analysis of three strains of Ehrlichia ruminantium reveals an active process of genome size plasticity.</title>
        <authorList>
            <person name="Frutos R."/>
            <person name="Viari A."/>
            <person name="Ferraz C."/>
            <person name="Morgat A."/>
            <person name="Eychenie S."/>
            <person name="Kandassamy Y."/>
            <person name="Chantal I."/>
            <person name="Bensaid A."/>
            <person name="Coissac E."/>
            <person name="Vachiery N."/>
            <person name="Demaille J."/>
            <person name="Martinez D."/>
        </authorList>
    </citation>
    <scope>NUCLEOTIDE SEQUENCE [LARGE SCALE GENOMIC DNA]</scope>
    <source>
        <strain>Gardel</strain>
    </source>
</reference>
<dbReference type="EC" id="4.2.1.11" evidence="1"/>
<dbReference type="EMBL" id="CR925677">
    <property type="protein sequence ID" value="CAI27948.1"/>
    <property type="molecule type" value="Genomic_DNA"/>
</dbReference>
<dbReference type="RefSeq" id="WP_011255615.1">
    <property type="nucleotide sequence ID" value="NC_006831.1"/>
</dbReference>
<dbReference type="SMR" id="Q5FH95"/>
<dbReference type="KEGG" id="erg:ERGA_CDS_04960"/>
<dbReference type="HOGENOM" id="CLU_031223_2_1_5"/>
<dbReference type="OrthoDB" id="9804716at2"/>
<dbReference type="UniPathway" id="UPA00109">
    <property type="reaction ID" value="UER00187"/>
</dbReference>
<dbReference type="Proteomes" id="UP000000533">
    <property type="component" value="Chromosome"/>
</dbReference>
<dbReference type="GO" id="GO:0009986">
    <property type="term" value="C:cell surface"/>
    <property type="evidence" value="ECO:0007669"/>
    <property type="project" value="UniProtKB-SubCell"/>
</dbReference>
<dbReference type="GO" id="GO:0005576">
    <property type="term" value="C:extracellular region"/>
    <property type="evidence" value="ECO:0007669"/>
    <property type="project" value="UniProtKB-SubCell"/>
</dbReference>
<dbReference type="GO" id="GO:0000015">
    <property type="term" value="C:phosphopyruvate hydratase complex"/>
    <property type="evidence" value="ECO:0007669"/>
    <property type="project" value="InterPro"/>
</dbReference>
<dbReference type="GO" id="GO:0000287">
    <property type="term" value="F:magnesium ion binding"/>
    <property type="evidence" value="ECO:0007669"/>
    <property type="project" value="UniProtKB-UniRule"/>
</dbReference>
<dbReference type="GO" id="GO:0004634">
    <property type="term" value="F:phosphopyruvate hydratase activity"/>
    <property type="evidence" value="ECO:0007669"/>
    <property type="project" value="UniProtKB-UniRule"/>
</dbReference>
<dbReference type="GO" id="GO:0006096">
    <property type="term" value="P:glycolytic process"/>
    <property type="evidence" value="ECO:0007669"/>
    <property type="project" value="UniProtKB-UniRule"/>
</dbReference>
<dbReference type="CDD" id="cd03313">
    <property type="entry name" value="enolase"/>
    <property type="match status" value="1"/>
</dbReference>
<dbReference type="Gene3D" id="3.20.20.120">
    <property type="entry name" value="Enolase-like C-terminal domain"/>
    <property type="match status" value="1"/>
</dbReference>
<dbReference type="Gene3D" id="3.30.390.10">
    <property type="entry name" value="Enolase-like, N-terminal domain"/>
    <property type="match status" value="1"/>
</dbReference>
<dbReference type="HAMAP" id="MF_00318">
    <property type="entry name" value="Enolase"/>
    <property type="match status" value="1"/>
</dbReference>
<dbReference type="InterPro" id="IPR000941">
    <property type="entry name" value="Enolase"/>
</dbReference>
<dbReference type="InterPro" id="IPR036849">
    <property type="entry name" value="Enolase-like_C_sf"/>
</dbReference>
<dbReference type="InterPro" id="IPR029017">
    <property type="entry name" value="Enolase-like_N"/>
</dbReference>
<dbReference type="InterPro" id="IPR020810">
    <property type="entry name" value="Enolase_C"/>
</dbReference>
<dbReference type="InterPro" id="IPR020809">
    <property type="entry name" value="Enolase_CS"/>
</dbReference>
<dbReference type="InterPro" id="IPR020811">
    <property type="entry name" value="Enolase_N"/>
</dbReference>
<dbReference type="NCBIfam" id="TIGR01060">
    <property type="entry name" value="eno"/>
    <property type="match status" value="1"/>
</dbReference>
<dbReference type="PANTHER" id="PTHR11902">
    <property type="entry name" value="ENOLASE"/>
    <property type="match status" value="1"/>
</dbReference>
<dbReference type="PANTHER" id="PTHR11902:SF1">
    <property type="entry name" value="ENOLASE"/>
    <property type="match status" value="1"/>
</dbReference>
<dbReference type="Pfam" id="PF00113">
    <property type="entry name" value="Enolase_C"/>
    <property type="match status" value="1"/>
</dbReference>
<dbReference type="Pfam" id="PF03952">
    <property type="entry name" value="Enolase_N"/>
    <property type="match status" value="1"/>
</dbReference>
<dbReference type="PIRSF" id="PIRSF001400">
    <property type="entry name" value="Enolase"/>
    <property type="match status" value="1"/>
</dbReference>
<dbReference type="PRINTS" id="PR00148">
    <property type="entry name" value="ENOLASE"/>
</dbReference>
<dbReference type="SFLD" id="SFLDF00002">
    <property type="entry name" value="enolase"/>
    <property type="match status" value="1"/>
</dbReference>
<dbReference type="SFLD" id="SFLDG00178">
    <property type="entry name" value="enolase"/>
    <property type="match status" value="1"/>
</dbReference>
<dbReference type="SMART" id="SM01192">
    <property type="entry name" value="Enolase_C"/>
    <property type="match status" value="1"/>
</dbReference>
<dbReference type="SMART" id="SM01193">
    <property type="entry name" value="Enolase_N"/>
    <property type="match status" value="1"/>
</dbReference>
<dbReference type="SUPFAM" id="SSF51604">
    <property type="entry name" value="Enolase C-terminal domain-like"/>
    <property type="match status" value="1"/>
</dbReference>
<dbReference type="SUPFAM" id="SSF54826">
    <property type="entry name" value="Enolase N-terminal domain-like"/>
    <property type="match status" value="1"/>
</dbReference>
<dbReference type="PROSITE" id="PS00164">
    <property type="entry name" value="ENOLASE"/>
    <property type="match status" value="1"/>
</dbReference>
<accession>Q5FH95</accession>
<feature type="chain" id="PRO_0000267031" description="Enolase">
    <location>
        <begin position="1"/>
        <end position="421"/>
    </location>
</feature>
<feature type="active site" description="Proton donor" evidence="1">
    <location>
        <position position="207"/>
    </location>
</feature>
<feature type="active site" description="Proton acceptor" evidence="1">
    <location>
        <position position="337"/>
    </location>
</feature>
<feature type="binding site" evidence="1">
    <location>
        <position position="244"/>
    </location>
    <ligand>
        <name>Mg(2+)</name>
        <dbReference type="ChEBI" id="CHEBI:18420"/>
    </ligand>
</feature>
<feature type="binding site" evidence="1">
    <location>
        <position position="285"/>
    </location>
    <ligand>
        <name>Mg(2+)</name>
        <dbReference type="ChEBI" id="CHEBI:18420"/>
    </ligand>
</feature>
<feature type="binding site" evidence="1">
    <location>
        <position position="312"/>
    </location>
    <ligand>
        <name>Mg(2+)</name>
        <dbReference type="ChEBI" id="CHEBI:18420"/>
    </ligand>
</feature>
<feature type="binding site" evidence="1">
    <location>
        <position position="337"/>
    </location>
    <ligand>
        <name>(2R)-2-phosphoglycerate</name>
        <dbReference type="ChEBI" id="CHEBI:58289"/>
    </ligand>
</feature>
<feature type="binding site" evidence="1">
    <location>
        <position position="366"/>
    </location>
    <ligand>
        <name>(2R)-2-phosphoglycerate</name>
        <dbReference type="ChEBI" id="CHEBI:58289"/>
    </ligand>
</feature>
<feature type="binding site" evidence="1">
    <location>
        <position position="367"/>
    </location>
    <ligand>
        <name>(2R)-2-phosphoglycerate</name>
        <dbReference type="ChEBI" id="CHEBI:58289"/>
    </ligand>
</feature>
<feature type="binding site" evidence="1">
    <location>
        <position position="388"/>
    </location>
    <ligand>
        <name>(2R)-2-phosphoglycerate</name>
        <dbReference type="ChEBI" id="CHEBI:58289"/>
    </ligand>
</feature>